<comment type="function">
    <text evidence="1">Transport of uracil in the cell.</text>
</comment>
<comment type="catalytic activity">
    <reaction evidence="1">
        <text>uracil(in) + H(+)(in) = uracil(out) + H(+)(out)</text>
        <dbReference type="Rhea" id="RHEA:29239"/>
        <dbReference type="ChEBI" id="CHEBI:15378"/>
        <dbReference type="ChEBI" id="CHEBI:17568"/>
    </reaction>
    <physiologicalReaction direction="right-to-left" evidence="1">
        <dbReference type="Rhea" id="RHEA:29241"/>
    </physiologicalReaction>
</comment>
<comment type="subcellular location">
    <subcellularLocation>
        <location evidence="1">Cell inner membrane</location>
        <topology evidence="1">Multi-pass membrane protein</topology>
    </subcellularLocation>
</comment>
<comment type="similarity">
    <text evidence="2">Belongs to the nucleobase:cation symporter-2 (NCS2) (TC 2.A.40) family.</text>
</comment>
<accession>Q9CPL9</accession>
<sequence>MTNQNPPVLLEQNHAKQAFVGLQMLFVAFGALVLVPLITGLNANTALLTAGIGTLLFQLCTGRQVPIFLASSFAFIAPIQYGVTTWGIATTMGGLVFTGLVYFALSTLVKIKGAGALQKVFPPVVVGPVIIIIGMGLAPVAVDMALGKNSTYQYNDAVFVSMATLLTTLGVAVFAKGMMKLIPIMFGIVVGYILCLFLGLINFQPVIDAPWFSVPEITTPEFKLEAILYLLPIAIAPAVEHVGGIMAISSVTGKDFLQKPGLHRTLLGDGIATSAASFLGGPPNTTYAEVTGAVMLTRNFNPKIMTWAAVWAIAISFCGKVGAFLSTIPTIVMGGIMMLVFGSIAVVGMSTLIRGKVDVTEARNLCIISVVMTFGIGGMFVNFGEVSLKGISLCAVVAILLNLILPKAKNTPIEENR</sequence>
<feature type="chain" id="PRO_0000165961" description="Probable uracil permease">
    <location>
        <begin position="1"/>
        <end position="417"/>
    </location>
</feature>
<feature type="topological domain" description="Cytoplasmic" evidence="1">
    <location>
        <begin position="1"/>
        <end position="13"/>
    </location>
</feature>
<feature type="transmembrane region" description="Helical" evidence="1">
    <location>
        <begin position="14"/>
        <end position="37"/>
    </location>
</feature>
<feature type="topological domain" description="Periplasmic" evidence="1">
    <location>
        <begin position="38"/>
        <end position="41"/>
    </location>
</feature>
<feature type="transmembrane region" description="Helical" evidence="1">
    <location>
        <begin position="42"/>
        <end position="61"/>
    </location>
</feature>
<feature type="topological domain" description="Cytoplasmic" evidence="1">
    <location>
        <begin position="62"/>
        <end position="64"/>
    </location>
</feature>
<feature type="transmembrane region" description="Discontinuously helical" evidence="1">
    <location>
        <begin position="65"/>
        <end position="81"/>
    </location>
</feature>
<feature type="topological domain" description="Periplasmic" evidence="1">
    <location>
        <begin position="83"/>
        <end position="90"/>
    </location>
</feature>
<feature type="transmembrane region" description="Helical" evidence="1">
    <location>
        <begin position="91"/>
        <end position="111"/>
    </location>
</feature>
<feature type="topological domain" description="Cytoplasmic" evidence="1">
    <location>
        <begin position="112"/>
        <end position="123"/>
    </location>
</feature>
<feature type="transmembrane region" description="Helical" evidence="1">
    <location>
        <begin position="124"/>
        <end position="145"/>
    </location>
</feature>
<feature type="topological domain" description="Periplasmic" evidence="1">
    <location>
        <begin position="146"/>
        <end position="154"/>
    </location>
</feature>
<feature type="transmembrane region" description="Helical" evidence="1">
    <location>
        <begin position="155"/>
        <end position="170"/>
    </location>
</feature>
<feature type="topological domain" description="Cytoplasmic" evidence="1">
    <location>
        <begin position="171"/>
        <end position="177"/>
    </location>
</feature>
<feature type="transmembrane region" description="Helical" evidence="1">
    <location>
        <begin position="178"/>
        <end position="198"/>
    </location>
</feature>
<feature type="topological domain" description="Periplasmic" evidence="1">
    <location>
        <begin position="199"/>
        <end position="223"/>
    </location>
</feature>
<feature type="transmembrane region" description="Helical" evidence="1">
    <location>
        <begin position="224"/>
        <end position="247"/>
    </location>
</feature>
<feature type="topological domain" description="Cytoplasmic" evidence="1">
    <location>
        <begin position="248"/>
        <end position="260"/>
    </location>
</feature>
<feature type="transmembrane region" description="Helical" evidence="1">
    <location>
        <begin position="261"/>
        <end position="280"/>
    </location>
</feature>
<feature type="transmembrane region" description="Discontinuously helical" evidence="1">
    <location>
        <begin position="281"/>
        <end position="297"/>
    </location>
</feature>
<feature type="topological domain" description="Cytoplasmic" evidence="1">
    <location>
        <begin position="298"/>
        <end position="300"/>
    </location>
</feature>
<feature type="transmembrane region" description="Helical" evidence="1">
    <location>
        <begin position="301"/>
        <end position="318"/>
    </location>
</feature>
<feature type="topological domain" description="Periplasmic" evidence="1">
    <location>
        <begin position="319"/>
        <end position="331"/>
    </location>
</feature>
<feature type="transmembrane region" description="Helical" evidence="1">
    <location>
        <begin position="332"/>
        <end position="353"/>
    </location>
</feature>
<feature type="topological domain" description="Cytoplasmic" evidence="1">
    <location>
        <begin position="354"/>
        <end position="364"/>
    </location>
</feature>
<feature type="intramembrane region" description="Discontinuously helical" evidence="1">
    <location>
        <begin position="365"/>
        <end position="400"/>
    </location>
</feature>
<feature type="topological domain" description="Cytoplasmic" evidence="1">
    <location>
        <begin position="401"/>
        <end position="416"/>
    </location>
</feature>
<feature type="binding site" evidence="1">
    <location>
        <position position="73"/>
    </location>
    <ligand>
        <name>uracil</name>
        <dbReference type="ChEBI" id="CHEBI:17568"/>
    </ligand>
</feature>
<feature type="binding site" evidence="1">
    <location>
        <position position="240"/>
    </location>
    <ligand>
        <name>uracil</name>
        <dbReference type="ChEBI" id="CHEBI:17568"/>
    </ligand>
</feature>
<feature type="binding site" evidence="1">
    <location>
        <position position="289"/>
    </location>
    <ligand>
        <name>uracil</name>
        <dbReference type="ChEBI" id="CHEBI:17568"/>
    </ligand>
</feature>
<keyword id="KW-0997">Cell inner membrane</keyword>
<keyword id="KW-1003">Cell membrane</keyword>
<keyword id="KW-0472">Membrane</keyword>
<keyword id="KW-1185">Reference proteome</keyword>
<keyword id="KW-0769">Symport</keyword>
<keyword id="KW-0812">Transmembrane</keyword>
<keyword id="KW-1133">Transmembrane helix</keyword>
<keyword id="KW-0813">Transport</keyword>
<dbReference type="EMBL" id="AE004439">
    <property type="protein sequence ID" value="AAK02102.1"/>
    <property type="molecule type" value="Genomic_DNA"/>
</dbReference>
<dbReference type="RefSeq" id="WP_010906431.1">
    <property type="nucleotide sequence ID" value="NC_002663.1"/>
</dbReference>
<dbReference type="SMR" id="Q9CPL9"/>
<dbReference type="STRING" id="272843.PM0018"/>
<dbReference type="EnsemblBacteria" id="AAK02102">
    <property type="protein sequence ID" value="AAK02102"/>
    <property type="gene ID" value="PM0018"/>
</dbReference>
<dbReference type="KEGG" id="pmu:PM0018"/>
<dbReference type="PATRIC" id="fig|272843.6.peg.18"/>
<dbReference type="HOGENOM" id="CLU_017959_1_2_6"/>
<dbReference type="OrthoDB" id="9779092at2"/>
<dbReference type="Proteomes" id="UP000000809">
    <property type="component" value="Chromosome"/>
</dbReference>
<dbReference type="GO" id="GO:0005886">
    <property type="term" value="C:plasma membrane"/>
    <property type="evidence" value="ECO:0007669"/>
    <property type="project" value="UniProtKB-SubCell"/>
</dbReference>
<dbReference type="GO" id="GO:0015293">
    <property type="term" value="F:symporter activity"/>
    <property type="evidence" value="ECO:0007669"/>
    <property type="project" value="UniProtKB-KW"/>
</dbReference>
<dbReference type="GO" id="GO:0042907">
    <property type="term" value="F:xanthine transmembrane transporter activity"/>
    <property type="evidence" value="ECO:0007669"/>
    <property type="project" value="TreeGrafter"/>
</dbReference>
<dbReference type="InterPro" id="IPR006043">
    <property type="entry name" value="NCS2"/>
</dbReference>
<dbReference type="InterPro" id="IPR006042">
    <property type="entry name" value="Xan_ur_permease"/>
</dbReference>
<dbReference type="NCBIfam" id="TIGR00801">
    <property type="entry name" value="ncs2"/>
    <property type="match status" value="1"/>
</dbReference>
<dbReference type="PANTHER" id="PTHR42810">
    <property type="entry name" value="PURINE PERMEASE C1399.01C-RELATED"/>
    <property type="match status" value="1"/>
</dbReference>
<dbReference type="PANTHER" id="PTHR42810:SF2">
    <property type="entry name" value="PURINE PERMEASE C1399.01C-RELATED"/>
    <property type="match status" value="1"/>
</dbReference>
<dbReference type="Pfam" id="PF00860">
    <property type="entry name" value="Xan_ur_permease"/>
    <property type="match status" value="1"/>
</dbReference>
<dbReference type="PROSITE" id="PS01116">
    <property type="entry name" value="XANTH_URACIL_PERMASE"/>
    <property type="match status" value="1"/>
</dbReference>
<proteinExistence type="inferred from homology"/>
<gene>
    <name type="primary">uraA</name>
    <name type="ordered locus">PM0018</name>
</gene>
<reference key="1">
    <citation type="journal article" date="2001" name="Proc. Natl. Acad. Sci. U.S.A.">
        <title>Complete genomic sequence of Pasteurella multocida Pm70.</title>
        <authorList>
            <person name="May B.J."/>
            <person name="Zhang Q."/>
            <person name="Li L.L."/>
            <person name="Paustian M.L."/>
            <person name="Whittam T.S."/>
            <person name="Kapur V."/>
        </authorList>
    </citation>
    <scope>NUCLEOTIDE SEQUENCE [LARGE SCALE GENOMIC DNA]</scope>
    <source>
        <strain>Pm70</strain>
    </source>
</reference>
<name>URAA_PASMU</name>
<organism>
    <name type="scientific">Pasteurella multocida (strain Pm70)</name>
    <dbReference type="NCBI Taxonomy" id="272843"/>
    <lineage>
        <taxon>Bacteria</taxon>
        <taxon>Pseudomonadati</taxon>
        <taxon>Pseudomonadota</taxon>
        <taxon>Gammaproteobacteria</taxon>
        <taxon>Pasteurellales</taxon>
        <taxon>Pasteurellaceae</taxon>
        <taxon>Pasteurella</taxon>
    </lineage>
</organism>
<protein>
    <recommendedName>
        <fullName evidence="1">Probable uracil permease</fullName>
    </recommendedName>
    <alternativeName>
        <fullName evidence="1">Uracil transporter</fullName>
    </alternativeName>
    <alternativeName>
        <fullName evidence="1">Uracil/H(+) symporter UraA</fullName>
    </alternativeName>
</protein>
<evidence type="ECO:0000250" key="1">
    <source>
        <dbReference type="UniProtKB" id="P0AGM7"/>
    </source>
</evidence>
<evidence type="ECO:0000305" key="2"/>